<accession>C4L858</accession>
<comment type="function">
    <text evidence="1">Catalyzes the NADPH-dependent rearrangement and reduction of 1-deoxy-D-xylulose-5-phosphate (DXP) to 2-C-methyl-D-erythritol 4-phosphate (MEP).</text>
</comment>
<comment type="catalytic activity">
    <reaction evidence="1">
        <text>2-C-methyl-D-erythritol 4-phosphate + NADP(+) = 1-deoxy-D-xylulose 5-phosphate + NADPH + H(+)</text>
        <dbReference type="Rhea" id="RHEA:13717"/>
        <dbReference type="ChEBI" id="CHEBI:15378"/>
        <dbReference type="ChEBI" id="CHEBI:57783"/>
        <dbReference type="ChEBI" id="CHEBI:57792"/>
        <dbReference type="ChEBI" id="CHEBI:58262"/>
        <dbReference type="ChEBI" id="CHEBI:58349"/>
        <dbReference type="EC" id="1.1.1.267"/>
    </reaction>
    <physiologicalReaction direction="right-to-left" evidence="1">
        <dbReference type="Rhea" id="RHEA:13719"/>
    </physiologicalReaction>
</comment>
<comment type="cofactor">
    <cofactor evidence="1">
        <name>Mg(2+)</name>
        <dbReference type="ChEBI" id="CHEBI:18420"/>
    </cofactor>
    <cofactor evidence="1">
        <name>Mn(2+)</name>
        <dbReference type="ChEBI" id="CHEBI:29035"/>
    </cofactor>
</comment>
<comment type="pathway">
    <text evidence="1">Isoprenoid biosynthesis; isopentenyl diphosphate biosynthesis via DXP pathway; isopentenyl diphosphate from 1-deoxy-D-xylulose 5-phosphate: step 1/6.</text>
</comment>
<comment type="similarity">
    <text evidence="1">Belongs to the DXR family.</text>
</comment>
<protein>
    <recommendedName>
        <fullName evidence="1">1-deoxy-D-xylulose 5-phosphate reductoisomerase</fullName>
        <shortName evidence="1">DXP reductoisomerase</shortName>
        <ecNumber evidence="1">1.1.1.267</ecNumber>
    </recommendedName>
    <alternativeName>
        <fullName evidence="1">1-deoxyxylulose-5-phosphate reductoisomerase</fullName>
    </alternativeName>
    <alternativeName>
        <fullName evidence="1">2-C-methyl-D-erythritol 4-phosphate synthase</fullName>
    </alternativeName>
</protein>
<dbReference type="EC" id="1.1.1.267" evidence="1"/>
<dbReference type="EMBL" id="CP001616">
    <property type="protein sequence ID" value="ACQ93704.1"/>
    <property type="molecule type" value="Genomic_DNA"/>
</dbReference>
<dbReference type="RefSeq" id="WP_015879172.1">
    <property type="nucleotide sequence ID" value="NC_012691.1"/>
</dbReference>
<dbReference type="SMR" id="C4L858"/>
<dbReference type="STRING" id="595494.Tola_2105"/>
<dbReference type="KEGG" id="tau:Tola_2105"/>
<dbReference type="eggNOG" id="COG0743">
    <property type="taxonomic scope" value="Bacteria"/>
</dbReference>
<dbReference type="HOGENOM" id="CLU_035714_4_0_6"/>
<dbReference type="OrthoDB" id="9806546at2"/>
<dbReference type="UniPathway" id="UPA00056">
    <property type="reaction ID" value="UER00092"/>
</dbReference>
<dbReference type="Proteomes" id="UP000009073">
    <property type="component" value="Chromosome"/>
</dbReference>
<dbReference type="GO" id="GO:0030604">
    <property type="term" value="F:1-deoxy-D-xylulose-5-phosphate reductoisomerase activity"/>
    <property type="evidence" value="ECO:0007669"/>
    <property type="project" value="UniProtKB-UniRule"/>
</dbReference>
<dbReference type="GO" id="GO:0030145">
    <property type="term" value="F:manganese ion binding"/>
    <property type="evidence" value="ECO:0007669"/>
    <property type="project" value="TreeGrafter"/>
</dbReference>
<dbReference type="GO" id="GO:0070402">
    <property type="term" value="F:NADPH binding"/>
    <property type="evidence" value="ECO:0007669"/>
    <property type="project" value="InterPro"/>
</dbReference>
<dbReference type="GO" id="GO:0051484">
    <property type="term" value="P:isopentenyl diphosphate biosynthetic process, methylerythritol 4-phosphate pathway involved in terpenoid biosynthetic process"/>
    <property type="evidence" value="ECO:0007669"/>
    <property type="project" value="TreeGrafter"/>
</dbReference>
<dbReference type="FunFam" id="1.10.1740.10:FF:000004">
    <property type="entry name" value="1-deoxy-D-xylulose 5-phosphate reductoisomerase"/>
    <property type="match status" value="1"/>
</dbReference>
<dbReference type="FunFam" id="3.40.50.720:FF:000045">
    <property type="entry name" value="1-deoxy-D-xylulose 5-phosphate reductoisomerase"/>
    <property type="match status" value="1"/>
</dbReference>
<dbReference type="Gene3D" id="1.10.1740.10">
    <property type="match status" value="1"/>
</dbReference>
<dbReference type="Gene3D" id="3.40.50.720">
    <property type="entry name" value="NAD(P)-binding Rossmann-like Domain"/>
    <property type="match status" value="1"/>
</dbReference>
<dbReference type="HAMAP" id="MF_00183">
    <property type="entry name" value="DXP_reductoisom"/>
    <property type="match status" value="1"/>
</dbReference>
<dbReference type="InterPro" id="IPR003821">
    <property type="entry name" value="DXP_reductoisomerase"/>
</dbReference>
<dbReference type="InterPro" id="IPR013644">
    <property type="entry name" value="DXP_reductoisomerase_C"/>
</dbReference>
<dbReference type="InterPro" id="IPR013512">
    <property type="entry name" value="DXP_reductoisomerase_N"/>
</dbReference>
<dbReference type="InterPro" id="IPR026877">
    <property type="entry name" value="DXPR_C"/>
</dbReference>
<dbReference type="InterPro" id="IPR036169">
    <property type="entry name" value="DXPR_C_sf"/>
</dbReference>
<dbReference type="InterPro" id="IPR036291">
    <property type="entry name" value="NAD(P)-bd_dom_sf"/>
</dbReference>
<dbReference type="NCBIfam" id="TIGR00243">
    <property type="entry name" value="Dxr"/>
    <property type="match status" value="1"/>
</dbReference>
<dbReference type="NCBIfam" id="NF003938">
    <property type="entry name" value="PRK05447.1-1"/>
    <property type="match status" value="1"/>
</dbReference>
<dbReference type="NCBIfam" id="NF009114">
    <property type="entry name" value="PRK12464.1"/>
    <property type="match status" value="1"/>
</dbReference>
<dbReference type="PANTHER" id="PTHR30525">
    <property type="entry name" value="1-DEOXY-D-XYLULOSE 5-PHOSPHATE REDUCTOISOMERASE"/>
    <property type="match status" value="1"/>
</dbReference>
<dbReference type="PANTHER" id="PTHR30525:SF0">
    <property type="entry name" value="1-DEOXY-D-XYLULOSE 5-PHOSPHATE REDUCTOISOMERASE, CHLOROPLASTIC"/>
    <property type="match status" value="1"/>
</dbReference>
<dbReference type="Pfam" id="PF08436">
    <property type="entry name" value="DXP_redisom_C"/>
    <property type="match status" value="1"/>
</dbReference>
<dbReference type="Pfam" id="PF02670">
    <property type="entry name" value="DXP_reductoisom"/>
    <property type="match status" value="1"/>
</dbReference>
<dbReference type="Pfam" id="PF13288">
    <property type="entry name" value="DXPR_C"/>
    <property type="match status" value="1"/>
</dbReference>
<dbReference type="PIRSF" id="PIRSF006205">
    <property type="entry name" value="Dxp_reductismrs"/>
    <property type="match status" value="1"/>
</dbReference>
<dbReference type="SUPFAM" id="SSF69055">
    <property type="entry name" value="1-deoxy-D-xylulose-5-phosphate reductoisomerase, C-terminal domain"/>
    <property type="match status" value="1"/>
</dbReference>
<dbReference type="SUPFAM" id="SSF55347">
    <property type="entry name" value="Glyceraldehyde-3-phosphate dehydrogenase-like, C-terminal domain"/>
    <property type="match status" value="1"/>
</dbReference>
<dbReference type="SUPFAM" id="SSF51735">
    <property type="entry name" value="NAD(P)-binding Rossmann-fold domains"/>
    <property type="match status" value="1"/>
</dbReference>
<sequence length="398" mass="42533">MQYLTILGSTGSIGRSTLDIVRRHPDRFAVTALTANQGVAQMMSDCLEFHPSYAVMADEASAIALKEALAGHKLKTEVLTGTDALCQVAAHSSVDIVMAAIVGAAGLLPAMAAIKKGKTVLLANKEALVMSGRLFMDAAHHYSARILPVDSEHNAIFQCLPAEAQSALGNCDLSAAGVDKILLTGSGGPFRYTSLSQLSSVTPEQAVAHPNWSMGRKISVDSATMMNKGLEFIEAKWLFNATEEQIQVIIHPQSVIHSMVQYRDGSVLAQMGQPDMRTPIAHALGFPERVASGVSPLDFSRVGELSFLPVDFERYPCLKLAIEACWAGQGATTALNAANEIAVDAFLSGKIGFTQIHTVVLDVLSELKQANINDLESILAIDAEARLMAHQKITRLAV</sequence>
<reference key="1">
    <citation type="submission" date="2009-05" db="EMBL/GenBank/DDBJ databases">
        <title>Complete sequence of Tolumonas auensis DSM 9187.</title>
        <authorList>
            <consortium name="US DOE Joint Genome Institute"/>
            <person name="Lucas S."/>
            <person name="Copeland A."/>
            <person name="Lapidus A."/>
            <person name="Glavina del Rio T."/>
            <person name="Tice H."/>
            <person name="Bruce D."/>
            <person name="Goodwin L."/>
            <person name="Pitluck S."/>
            <person name="Chertkov O."/>
            <person name="Brettin T."/>
            <person name="Detter J.C."/>
            <person name="Han C."/>
            <person name="Larimer F."/>
            <person name="Land M."/>
            <person name="Hauser L."/>
            <person name="Kyrpides N."/>
            <person name="Mikhailova N."/>
            <person name="Spring S."/>
            <person name="Beller H."/>
        </authorList>
    </citation>
    <scope>NUCLEOTIDE SEQUENCE [LARGE SCALE GENOMIC DNA]</scope>
    <source>
        <strain>DSM 9187 / NBRC 110442 / TA 4</strain>
    </source>
</reference>
<organism>
    <name type="scientific">Tolumonas auensis (strain DSM 9187 / NBRC 110442 / TA 4)</name>
    <dbReference type="NCBI Taxonomy" id="595494"/>
    <lineage>
        <taxon>Bacteria</taxon>
        <taxon>Pseudomonadati</taxon>
        <taxon>Pseudomonadota</taxon>
        <taxon>Gammaproteobacteria</taxon>
        <taxon>Aeromonadales</taxon>
        <taxon>Aeromonadaceae</taxon>
        <taxon>Tolumonas</taxon>
    </lineage>
</organism>
<name>DXR_TOLAT</name>
<feature type="chain" id="PRO_1000203893" description="1-deoxy-D-xylulose 5-phosphate reductoisomerase">
    <location>
        <begin position="1"/>
        <end position="398"/>
    </location>
</feature>
<feature type="binding site" evidence="1">
    <location>
        <position position="10"/>
    </location>
    <ligand>
        <name>NADPH</name>
        <dbReference type="ChEBI" id="CHEBI:57783"/>
    </ligand>
</feature>
<feature type="binding site" evidence="1">
    <location>
        <position position="11"/>
    </location>
    <ligand>
        <name>NADPH</name>
        <dbReference type="ChEBI" id="CHEBI:57783"/>
    </ligand>
</feature>
<feature type="binding site" evidence="1">
    <location>
        <position position="12"/>
    </location>
    <ligand>
        <name>NADPH</name>
        <dbReference type="ChEBI" id="CHEBI:57783"/>
    </ligand>
</feature>
<feature type="binding site" evidence="1">
    <location>
        <position position="13"/>
    </location>
    <ligand>
        <name>NADPH</name>
        <dbReference type="ChEBI" id="CHEBI:57783"/>
    </ligand>
</feature>
<feature type="binding site" evidence="1">
    <location>
        <position position="124"/>
    </location>
    <ligand>
        <name>NADPH</name>
        <dbReference type="ChEBI" id="CHEBI:57783"/>
    </ligand>
</feature>
<feature type="binding site" evidence="1">
    <location>
        <position position="125"/>
    </location>
    <ligand>
        <name>1-deoxy-D-xylulose 5-phosphate</name>
        <dbReference type="ChEBI" id="CHEBI:57792"/>
    </ligand>
</feature>
<feature type="binding site" evidence="1">
    <location>
        <position position="126"/>
    </location>
    <ligand>
        <name>NADPH</name>
        <dbReference type="ChEBI" id="CHEBI:57783"/>
    </ligand>
</feature>
<feature type="binding site" evidence="1">
    <location>
        <position position="150"/>
    </location>
    <ligand>
        <name>Mn(2+)</name>
        <dbReference type="ChEBI" id="CHEBI:29035"/>
    </ligand>
</feature>
<feature type="binding site" evidence="1">
    <location>
        <position position="151"/>
    </location>
    <ligand>
        <name>1-deoxy-D-xylulose 5-phosphate</name>
        <dbReference type="ChEBI" id="CHEBI:57792"/>
    </ligand>
</feature>
<feature type="binding site" evidence="1">
    <location>
        <position position="152"/>
    </location>
    <ligand>
        <name>1-deoxy-D-xylulose 5-phosphate</name>
        <dbReference type="ChEBI" id="CHEBI:57792"/>
    </ligand>
</feature>
<feature type="binding site" evidence="1">
    <location>
        <position position="152"/>
    </location>
    <ligand>
        <name>Mn(2+)</name>
        <dbReference type="ChEBI" id="CHEBI:29035"/>
    </ligand>
</feature>
<feature type="binding site" evidence="1">
    <location>
        <position position="186"/>
    </location>
    <ligand>
        <name>1-deoxy-D-xylulose 5-phosphate</name>
        <dbReference type="ChEBI" id="CHEBI:57792"/>
    </ligand>
</feature>
<feature type="binding site" evidence="1">
    <location>
        <position position="209"/>
    </location>
    <ligand>
        <name>1-deoxy-D-xylulose 5-phosphate</name>
        <dbReference type="ChEBI" id="CHEBI:57792"/>
    </ligand>
</feature>
<feature type="binding site" evidence="1">
    <location>
        <position position="215"/>
    </location>
    <ligand>
        <name>NADPH</name>
        <dbReference type="ChEBI" id="CHEBI:57783"/>
    </ligand>
</feature>
<feature type="binding site" evidence="1">
    <location>
        <position position="222"/>
    </location>
    <ligand>
        <name>1-deoxy-D-xylulose 5-phosphate</name>
        <dbReference type="ChEBI" id="CHEBI:57792"/>
    </ligand>
</feature>
<feature type="binding site" evidence="1">
    <location>
        <position position="227"/>
    </location>
    <ligand>
        <name>1-deoxy-D-xylulose 5-phosphate</name>
        <dbReference type="ChEBI" id="CHEBI:57792"/>
    </ligand>
</feature>
<feature type="binding site" evidence="1">
    <location>
        <position position="228"/>
    </location>
    <ligand>
        <name>1-deoxy-D-xylulose 5-phosphate</name>
        <dbReference type="ChEBI" id="CHEBI:57792"/>
    </ligand>
</feature>
<feature type="binding site" evidence="1">
    <location>
        <position position="231"/>
    </location>
    <ligand>
        <name>1-deoxy-D-xylulose 5-phosphate</name>
        <dbReference type="ChEBI" id="CHEBI:57792"/>
    </ligand>
</feature>
<feature type="binding site" evidence="1">
    <location>
        <position position="231"/>
    </location>
    <ligand>
        <name>Mn(2+)</name>
        <dbReference type="ChEBI" id="CHEBI:29035"/>
    </ligand>
</feature>
<gene>
    <name evidence="1" type="primary">dxr</name>
    <name type="ordered locus">Tola_2105</name>
</gene>
<keyword id="KW-0414">Isoprene biosynthesis</keyword>
<keyword id="KW-0464">Manganese</keyword>
<keyword id="KW-0479">Metal-binding</keyword>
<keyword id="KW-0521">NADP</keyword>
<keyword id="KW-0560">Oxidoreductase</keyword>
<keyword id="KW-1185">Reference proteome</keyword>
<proteinExistence type="inferred from homology"/>
<evidence type="ECO:0000255" key="1">
    <source>
        <dbReference type="HAMAP-Rule" id="MF_00183"/>
    </source>
</evidence>